<proteinExistence type="inferred from homology"/>
<keyword id="KW-0067">ATP-binding</keyword>
<keyword id="KW-0143">Chaperone</keyword>
<keyword id="KW-0479">Metal-binding</keyword>
<keyword id="KW-0547">Nucleotide-binding</keyword>
<keyword id="KW-0862">Zinc</keyword>
<gene>
    <name evidence="1" type="primary">clpX</name>
    <name type="ordered locus">Caul_2846</name>
</gene>
<protein>
    <recommendedName>
        <fullName evidence="1">ATP-dependent Clp protease ATP-binding subunit ClpX</fullName>
    </recommendedName>
</protein>
<evidence type="ECO:0000255" key="1">
    <source>
        <dbReference type="HAMAP-Rule" id="MF_00175"/>
    </source>
</evidence>
<evidence type="ECO:0000255" key="2">
    <source>
        <dbReference type="PROSITE-ProRule" id="PRU01250"/>
    </source>
</evidence>
<comment type="function">
    <text evidence="1">ATP-dependent specificity component of the Clp protease. It directs the protease to specific substrates. Can perform chaperone functions in the absence of ClpP.</text>
</comment>
<comment type="subunit">
    <text evidence="1">Component of the ClpX-ClpP complex. Forms a hexameric ring that, in the presence of ATP, binds to fourteen ClpP subunits assembled into a disk-like structure with a central cavity, resembling the structure of eukaryotic proteasomes.</text>
</comment>
<comment type="similarity">
    <text evidence="1">Belongs to the ClpX chaperone family.</text>
</comment>
<dbReference type="EMBL" id="CP000927">
    <property type="protein sequence ID" value="ABZ71973.1"/>
    <property type="molecule type" value="Genomic_DNA"/>
</dbReference>
<dbReference type="SMR" id="B0SZ62"/>
<dbReference type="STRING" id="366602.Caul_2846"/>
<dbReference type="KEGG" id="cak:Caul_2846"/>
<dbReference type="eggNOG" id="COG1219">
    <property type="taxonomic scope" value="Bacteria"/>
</dbReference>
<dbReference type="HOGENOM" id="CLU_014218_8_2_5"/>
<dbReference type="OrthoDB" id="9804062at2"/>
<dbReference type="GO" id="GO:0009376">
    <property type="term" value="C:HslUV protease complex"/>
    <property type="evidence" value="ECO:0007669"/>
    <property type="project" value="TreeGrafter"/>
</dbReference>
<dbReference type="GO" id="GO:0005524">
    <property type="term" value="F:ATP binding"/>
    <property type="evidence" value="ECO:0007669"/>
    <property type="project" value="UniProtKB-UniRule"/>
</dbReference>
<dbReference type="GO" id="GO:0016887">
    <property type="term" value="F:ATP hydrolysis activity"/>
    <property type="evidence" value="ECO:0007669"/>
    <property type="project" value="InterPro"/>
</dbReference>
<dbReference type="GO" id="GO:0140662">
    <property type="term" value="F:ATP-dependent protein folding chaperone"/>
    <property type="evidence" value="ECO:0007669"/>
    <property type="project" value="InterPro"/>
</dbReference>
<dbReference type="GO" id="GO:0046983">
    <property type="term" value="F:protein dimerization activity"/>
    <property type="evidence" value="ECO:0007669"/>
    <property type="project" value="InterPro"/>
</dbReference>
<dbReference type="GO" id="GO:0051082">
    <property type="term" value="F:unfolded protein binding"/>
    <property type="evidence" value="ECO:0007669"/>
    <property type="project" value="UniProtKB-UniRule"/>
</dbReference>
<dbReference type="GO" id="GO:0008270">
    <property type="term" value="F:zinc ion binding"/>
    <property type="evidence" value="ECO:0007669"/>
    <property type="project" value="InterPro"/>
</dbReference>
<dbReference type="GO" id="GO:0051301">
    <property type="term" value="P:cell division"/>
    <property type="evidence" value="ECO:0007669"/>
    <property type="project" value="TreeGrafter"/>
</dbReference>
<dbReference type="GO" id="GO:0051603">
    <property type="term" value="P:proteolysis involved in protein catabolic process"/>
    <property type="evidence" value="ECO:0007669"/>
    <property type="project" value="TreeGrafter"/>
</dbReference>
<dbReference type="CDD" id="cd19497">
    <property type="entry name" value="RecA-like_ClpX"/>
    <property type="match status" value="1"/>
</dbReference>
<dbReference type="FunFam" id="1.10.8.60:FF:000002">
    <property type="entry name" value="ATP-dependent Clp protease ATP-binding subunit ClpX"/>
    <property type="match status" value="1"/>
</dbReference>
<dbReference type="FunFam" id="3.40.50.300:FF:000005">
    <property type="entry name" value="ATP-dependent Clp protease ATP-binding subunit ClpX"/>
    <property type="match status" value="1"/>
</dbReference>
<dbReference type="Gene3D" id="1.10.8.60">
    <property type="match status" value="1"/>
</dbReference>
<dbReference type="Gene3D" id="6.20.220.10">
    <property type="entry name" value="ClpX chaperone, C4-type zinc finger domain"/>
    <property type="match status" value="1"/>
</dbReference>
<dbReference type="Gene3D" id="3.40.50.300">
    <property type="entry name" value="P-loop containing nucleotide triphosphate hydrolases"/>
    <property type="match status" value="1"/>
</dbReference>
<dbReference type="HAMAP" id="MF_00175">
    <property type="entry name" value="ClpX"/>
    <property type="match status" value="1"/>
</dbReference>
<dbReference type="InterPro" id="IPR003593">
    <property type="entry name" value="AAA+_ATPase"/>
</dbReference>
<dbReference type="InterPro" id="IPR050052">
    <property type="entry name" value="ATP-dep_Clp_protease_ClpX"/>
</dbReference>
<dbReference type="InterPro" id="IPR003959">
    <property type="entry name" value="ATPase_AAA_core"/>
</dbReference>
<dbReference type="InterPro" id="IPR019489">
    <property type="entry name" value="Clp_ATPase_C"/>
</dbReference>
<dbReference type="InterPro" id="IPR004487">
    <property type="entry name" value="Clp_protease_ATP-bd_su_ClpX"/>
</dbReference>
<dbReference type="InterPro" id="IPR046425">
    <property type="entry name" value="ClpX_bact"/>
</dbReference>
<dbReference type="InterPro" id="IPR027417">
    <property type="entry name" value="P-loop_NTPase"/>
</dbReference>
<dbReference type="InterPro" id="IPR010603">
    <property type="entry name" value="Znf_CppX_C4"/>
</dbReference>
<dbReference type="InterPro" id="IPR038366">
    <property type="entry name" value="Znf_CppX_C4_sf"/>
</dbReference>
<dbReference type="NCBIfam" id="TIGR00382">
    <property type="entry name" value="clpX"/>
    <property type="match status" value="1"/>
</dbReference>
<dbReference type="NCBIfam" id="NF003745">
    <property type="entry name" value="PRK05342.1"/>
    <property type="match status" value="1"/>
</dbReference>
<dbReference type="PANTHER" id="PTHR48102:SF7">
    <property type="entry name" value="ATP-DEPENDENT CLP PROTEASE ATP-BINDING SUBUNIT CLPX-LIKE, MITOCHONDRIAL"/>
    <property type="match status" value="1"/>
</dbReference>
<dbReference type="PANTHER" id="PTHR48102">
    <property type="entry name" value="ATP-DEPENDENT CLP PROTEASE ATP-BINDING SUBUNIT CLPX-LIKE, MITOCHONDRIAL-RELATED"/>
    <property type="match status" value="1"/>
</dbReference>
<dbReference type="Pfam" id="PF07724">
    <property type="entry name" value="AAA_2"/>
    <property type="match status" value="1"/>
</dbReference>
<dbReference type="Pfam" id="PF10431">
    <property type="entry name" value="ClpB_D2-small"/>
    <property type="match status" value="1"/>
</dbReference>
<dbReference type="Pfam" id="PF06689">
    <property type="entry name" value="zf-C4_ClpX"/>
    <property type="match status" value="1"/>
</dbReference>
<dbReference type="SMART" id="SM00382">
    <property type="entry name" value="AAA"/>
    <property type="match status" value="1"/>
</dbReference>
<dbReference type="SMART" id="SM01086">
    <property type="entry name" value="ClpB_D2-small"/>
    <property type="match status" value="1"/>
</dbReference>
<dbReference type="SMART" id="SM00994">
    <property type="entry name" value="zf-C4_ClpX"/>
    <property type="match status" value="1"/>
</dbReference>
<dbReference type="SUPFAM" id="SSF57716">
    <property type="entry name" value="Glucocorticoid receptor-like (DNA-binding domain)"/>
    <property type="match status" value="1"/>
</dbReference>
<dbReference type="SUPFAM" id="SSF52540">
    <property type="entry name" value="P-loop containing nucleoside triphosphate hydrolases"/>
    <property type="match status" value="1"/>
</dbReference>
<dbReference type="PROSITE" id="PS51902">
    <property type="entry name" value="CLPX_ZB"/>
    <property type="match status" value="1"/>
</dbReference>
<feature type="chain" id="PRO_1000077147" description="ATP-dependent Clp protease ATP-binding subunit ClpX">
    <location>
        <begin position="1"/>
        <end position="420"/>
    </location>
</feature>
<feature type="domain" description="ClpX-type ZB" evidence="2">
    <location>
        <begin position="3"/>
        <end position="56"/>
    </location>
</feature>
<feature type="binding site" evidence="2">
    <location>
        <position position="15"/>
    </location>
    <ligand>
        <name>Zn(2+)</name>
        <dbReference type="ChEBI" id="CHEBI:29105"/>
    </ligand>
</feature>
<feature type="binding site" evidence="2">
    <location>
        <position position="18"/>
    </location>
    <ligand>
        <name>Zn(2+)</name>
        <dbReference type="ChEBI" id="CHEBI:29105"/>
    </ligand>
</feature>
<feature type="binding site" evidence="2">
    <location>
        <position position="37"/>
    </location>
    <ligand>
        <name>Zn(2+)</name>
        <dbReference type="ChEBI" id="CHEBI:29105"/>
    </ligand>
</feature>
<feature type="binding site" evidence="2">
    <location>
        <position position="40"/>
    </location>
    <ligand>
        <name>Zn(2+)</name>
        <dbReference type="ChEBI" id="CHEBI:29105"/>
    </ligand>
</feature>
<feature type="binding site" evidence="1">
    <location>
        <begin position="119"/>
        <end position="126"/>
    </location>
    <ligand>
        <name>ATP</name>
        <dbReference type="ChEBI" id="CHEBI:30616"/>
    </ligand>
</feature>
<organism>
    <name type="scientific">Caulobacter sp. (strain K31)</name>
    <dbReference type="NCBI Taxonomy" id="366602"/>
    <lineage>
        <taxon>Bacteria</taxon>
        <taxon>Pseudomonadati</taxon>
        <taxon>Pseudomonadota</taxon>
        <taxon>Alphaproteobacteria</taxon>
        <taxon>Caulobacterales</taxon>
        <taxon>Caulobacteraceae</taxon>
        <taxon>Caulobacter</taxon>
    </lineage>
</organism>
<accession>B0SZ62</accession>
<sequence>MTKAASGDTKSTLYCSFCGKSQHEVRKLIAGPTVFICDECVELCMDIIREEHKIAFVKSKDGVPTPREICEVLDDYVIGQNHAKKVLAVAVHNHYKRLNHASKNNDVELAKSNILLVGPTGTGKTLLAQTLARIIDVPFTMADATTLTEAGYVGEDVENIVLKLLQAADYNVERAQRGIVYIDEIDKISRKSDNPSITRDVSGEGVQQALLKIMEGTVASVPPQGGRKHPQQEFLQVDTTNILFICGGAFAGLERIISARGQGKSIGFGAKVADPEERRTGEILRGVEPDDLQRFGLIPEFIGRLPVIATLEDLDEAALVKILTEPKNAFVKQYQRLFEMENIGLTFTEDALHGVAKKAILRKTGARGLRSIMEGILLETMFELPNYEGVEEVVVNAEVVEGRAQPLLIYAEKKGGAASA</sequence>
<name>CLPX_CAUSK</name>
<reference key="1">
    <citation type="submission" date="2008-01" db="EMBL/GenBank/DDBJ databases">
        <title>Complete sequence of chromosome of Caulobacter sp. K31.</title>
        <authorList>
            <consortium name="US DOE Joint Genome Institute"/>
            <person name="Copeland A."/>
            <person name="Lucas S."/>
            <person name="Lapidus A."/>
            <person name="Barry K."/>
            <person name="Glavina del Rio T."/>
            <person name="Dalin E."/>
            <person name="Tice H."/>
            <person name="Pitluck S."/>
            <person name="Bruce D."/>
            <person name="Goodwin L."/>
            <person name="Thompson L.S."/>
            <person name="Brettin T."/>
            <person name="Detter J.C."/>
            <person name="Han C."/>
            <person name="Schmutz J."/>
            <person name="Larimer F."/>
            <person name="Land M."/>
            <person name="Hauser L."/>
            <person name="Kyrpides N."/>
            <person name="Kim E."/>
            <person name="Stephens C."/>
            <person name="Richardson P."/>
        </authorList>
    </citation>
    <scope>NUCLEOTIDE SEQUENCE [LARGE SCALE GENOMIC DNA]</scope>
    <source>
        <strain>K31</strain>
    </source>
</reference>